<sequence length="248" mass="27850">MERSTHSTGWTCLPPPPPEPAAPGRGVCAMSTSWRDKQQPSLINFIAAFLAANSYRLNFLSISPDFIFNNGELSVAFIFETNWDCQNEGAVFSRVNMLKRQLKHLYVVVAVPTKEQNESFNRSYHKYGMKLGFPTFVPVTDPEMGFEKIVKIAHALGVCKQQDIISRLKNEREQAVQCTDSFLRVLTSIPGIDNHDANALAQAIGSIEAIAKASKKFILENTDLSTDKAETIVRFFRDPQYYLSPKIN</sequence>
<proteinExistence type="evidence at protein level"/>
<comment type="function">
    <text evidence="2 3">Essential for normal crossover (CO) formation during meiosis (PubMed:30589140, PubMed:31266799). Essential component for the formation of class I meiotic COs (PubMed:31266799). Interacts with SHOC1, another meiotic component, to regulate CO formation, possibly by stabilizing the recombination intermediates during meiosis (PubMed:30589140, PubMed:31266799). PTD and SHOC1 may form transient heterotrimeric or heterotetrameric complexes with HEI10 and/or ZIP4 to promote class I COs formation (PubMed:31266799). Does not seem to be involved in early meiotic recombination steps involving double-strand break (DSB) formation, processing, and single-strand invasion (PubMed:31266799). Does not seem to be involved in homologous pairing or synaptonemal complex (SC) assembly (PubMed:31266799).</text>
</comment>
<comment type="subunit">
    <text evidence="2 3">Interacts with SHOC1 (via C-terminus) (PubMed:30589140, PubMed:31266799). Interacts with HEI10 (PubMed:31266799).</text>
</comment>
<comment type="subcellular location">
    <subcellularLocation>
        <location evidence="3">Chromosome</location>
    </subcellularLocation>
    <subcellularLocation>
        <location evidence="2 3">Nucleus</location>
    </subcellularLocation>
    <subcellularLocation>
        <location evidence="2">Cytoplasm</location>
    </subcellularLocation>
    <subcellularLocation>
        <location evidence="2">Cell membrane</location>
    </subcellularLocation>
    <text evidence="2 3">Predominantly localized in the nucleus (PubMed:30589140). Localized in punctuate foci onto meiocyte chromosomes from leptotene to early pachytene with a maximal number of foci at zygotene (PubMed:31266799).</text>
</comment>
<comment type="tissue specificity">
    <text evidence="2">Highly expressed in anthers and pistil during meiosis (PubMed:30589140). Expressed in pollen mother cells (PMCs) during meiosis (PubMed:30589140). Expressed at low levels in roots, shoots, leaves, flowers, and glumes (PubMed:30589140).</text>
</comment>
<comment type="disruption phenotype">
    <text evidence="2 3">Complete sterility of male and female gametophytes due to altered meiosis (PubMed:30589140, PubMed:31266799). Striking reduction in the number of meiotic crossovers (PubMed:30589140, PubMed:31266799).</text>
</comment>
<comment type="similarity">
    <text evidence="6">Belongs to the ERCC1/RAD10/SWI10 family.</text>
</comment>
<comment type="sequence caution" evidence="6">
    <conflict type="erroneous gene model prediction">
        <sequence resource="EMBL-CDS" id="AAT37994"/>
    </conflict>
</comment>
<accession>Q6L5B5</accession>
<accession>Q6L570</accession>
<gene>
    <name evidence="5" type="primary">PTD</name>
    <name evidence="4" type="synonym">PTD1</name>
    <name evidence="9" type="ordered locus">Os05g0588200</name>
    <name evidence="6" type="ordered locus">LOC_Os05g51060</name>
    <name evidence="8" type="ORF">OJ1007_H05.15</name>
    <name evidence="7" type="ORF">OJ1115_D04.1</name>
    <name evidence="10" type="ORF">OsJ_19727</name>
</gene>
<keyword id="KW-1003">Cell membrane</keyword>
<keyword id="KW-0158">Chromosome</keyword>
<keyword id="KW-0963">Cytoplasm</keyword>
<keyword id="KW-0233">DNA recombination</keyword>
<keyword id="KW-0255">Endonuclease</keyword>
<keyword id="KW-0378">Hydrolase</keyword>
<keyword id="KW-0469">Meiosis</keyword>
<keyword id="KW-0472">Membrane</keyword>
<keyword id="KW-0540">Nuclease</keyword>
<keyword id="KW-0539">Nucleus</keyword>
<keyword id="KW-1185">Reference proteome</keyword>
<evidence type="ECO:0000256" key="1">
    <source>
        <dbReference type="SAM" id="MobiDB-lite"/>
    </source>
</evidence>
<evidence type="ECO:0000269" key="2">
    <source>
    </source>
</evidence>
<evidence type="ECO:0000269" key="3">
    <source>
    </source>
</evidence>
<evidence type="ECO:0000303" key="4">
    <source>
    </source>
</evidence>
<evidence type="ECO:0000303" key="5">
    <source>
    </source>
</evidence>
<evidence type="ECO:0000305" key="6"/>
<evidence type="ECO:0000312" key="7">
    <source>
        <dbReference type="EMBL" id="AAT37994.1"/>
    </source>
</evidence>
<evidence type="ECO:0000312" key="8">
    <source>
        <dbReference type="EMBL" id="AAT44166.1"/>
    </source>
</evidence>
<evidence type="ECO:0000312" key="9">
    <source>
        <dbReference type="EMBL" id="BAF18387.1"/>
    </source>
</evidence>
<evidence type="ECO:0000312" key="10">
    <source>
        <dbReference type="EMBL" id="EEE64870.1"/>
    </source>
</evidence>
<reference key="1">
    <citation type="journal article" date="2005" name="Mol. Genet. Genomics">
        <title>A fine physical map of the rice chromosome 5.</title>
        <authorList>
            <person name="Cheng C.-H."/>
            <person name="Chung M.C."/>
            <person name="Liu S.-M."/>
            <person name="Chen S.-K."/>
            <person name="Kao F.Y."/>
            <person name="Lin S.-J."/>
            <person name="Hsiao S.-H."/>
            <person name="Tseng I.C."/>
            <person name="Hsing Y.-I.C."/>
            <person name="Wu H.-P."/>
            <person name="Chen C.-S."/>
            <person name="Shaw J.-F."/>
            <person name="Wu J."/>
            <person name="Matsumoto T."/>
            <person name="Sasaki T."/>
            <person name="Chen H.-C."/>
            <person name="Chow T.-Y."/>
        </authorList>
    </citation>
    <scope>NUCLEOTIDE SEQUENCE [LARGE SCALE GENOMIC DNA]</scope>
    <source>
        <strain>cv. Nipponbare</strain>
    </source>
</reference>
<reference key="2">
    <citation type="journal article" date="2005" name="Nature">
        <title>The map-based sequence of the rice genome.</title>
        <authorList>
            <consortium name="International rice genome sequencing project (IRGSP)"/>
        </authorList>
    </citation>
    <scope>NUCLEOTIDE SEQUENCE [LARGE SCALE GENOMIC DNA]</scope>
    <source>
        <strain>cv. Nipponbare</strain>
    </source>
</reference>
<reference key="3">
    <citation type="journal article" date="2008" name="Nucleic Acids Res.">
        <title>The rice annotation project database (RAP-DB): 2008 update.</title>
        <authorList>
            <consortium name="The rice annotation project (RAP)"/>
        </authorList>
    </citation>
    <scope>GENOME REANNOTATION</scope>
    <source>
        <strain>cv. Nipponbare</strain>
    </source>
</reference>
<reference key="4">
    <citation type="journal article" date="2013" name="Rice">
        <title>Improvement of the Oryza sativa Nipponbare reference genome using next generation sequence and optical map data.</title>
        <authorList>
            <person name="Kawahara Y."/>
            <person name="de la Bastide M."/>
            <person name="Hamilton J.P."/>
            <person name="Kanamori H."/>
            <person name="McCombie W.R."/>
            <person name="Ouyang S."/>
            <person name="Schwartz D.C."/>
            <person name="Tanaka T."/>
            <person name="Wu J."/>
            <person name="Zhou S."/>
            <person name="Childs K.L."/>
            <person name="Davidson R.M."/>
            <person name="Lin H."/>
            <person name="Quesada-Ocampo L."/>
            <person name="Vaillancourt B."/>
            <person name="Sakai H."/>
            <person name="Lee S.S."/>
            <person name="Kim J."/>
            <person name="Numa H."/>
            <person name="Itoh T."/>
            <person name="Buell C.R."/>
            <person name="Matsumoto T."/>
        </authorList>
    </citation>
    <scope>GENOME REANNOTATION</scope>
    <source>
        <strain>cv. Nipponbare</strain>
    </source>
</reference>
<reference key="5">
    <citation type="journal article" date="2005" name="PLoS Biol.">
        <title>The genomes of Oryza sativa: a history of duplications.</title>
        <authorList>
            <person name="Yu J."/>
            <person name="Wang J."/>
            <person name="Lin W."/>
            <person name="Li S."/>
            <person name="Li H."/>
            <person name="Zhou J."/>
            <person name="Ni P."/>
            <person name="Dong W."/>
            <person name="Hu S."/>
            <person name="Zeng C."/>
            <person name="Zhang J."/>
            <person name="Zhang Y."/>
            <person name="Li R."/>
            <person name="Xu Z."/>
            <person name="Li S."/>
            <person name="Li X."/>
            <person name="Zheng H."/>
            <person name="Cong L."/>
            <person name="Lin L."/>
            <person name="Yin J."/>
            <person name="Geng J."/>
            <person name="Li G."/>
            <person name="Shi J."/>
            <person name="Liu J."/>
            <person name="Lv H."/>
            <person name="Li J."/>
            <person name="Wang J."/>
            <person name="Deng Y."/>
            <person name="Ran L."/>
            <person name="Shi X."/>
            <person name="Wang X."/>
            <person name="Wu Q."/>
            <person name="Li C."/>
            <person name="Ren X."/>
            <person name="Wang J."/>
            <person name="Wang X."/>
            <person name="Li D."/>
            <person name="Liu D."/>
            <person name="Zhang X."/>
            <person name="Ji Z."/>
            <person name="Zhao W."/>
            <person name="Sun Y."/>
            <person name="Zhang Z."/>
            <person name="Bao J."/>
            <person name="Han Y."/>
            <person name="Dong L."/>
            <person name="Ji J."/>
            <person name="Chen P."/>
            <person name="Wu S."/>
            <person name="Liu J."/>
            <person name="Xiao Y."/>
            <person name="Bu D."/>
            <person name="Tan J."/>
            <person name="Yang L."/>
            <person name="Ye C."/>
            <person name="Zhang J."/>
            <person name="Xu J."/>
            <person name="Zhou Y."/>
            <person name="Yu Y."/>
            <person name="Zhang B."/>
            <person name="Zhuang S."/>
            <person name="Wei H."/>
            <person name="Liu B."/>
            <person name="Lei M."/>
            <person name="Yu H."/>
            <person name="Li Y."/>
            <person name="Xu H."/>
            <person name="Wei S."/>
            <person name="He X."/>
            <person name="Fang L."/>
            <person name="Zhang Z."/>
            <person name="Zhang Y."/>
            <person name="Huang X."/>
            <person name="Su Z."/>
            <person name="Tong W."/>
            <person name="Li J."/>
            <person name="Tong Z."/>
            <person name="Li S."/>
            <person name="Ye J."/>
            <person name="Wang L."/>
            <person name="Fang L."/>
            <person name="Lei T."/>
            <person name="Chen C.-S."/>
            <person name="Chen H.-C."/>
            <person name="Xu Z."/>
            <person name="Li H."/>
            <person name="Huang H."/>
            <person name="Zhang F."/>
            <person name="Xu H."/>
            <person name="Li N."/>
            <person name="Zhao C."/>
            <person name="Li S."/>
            <person name="Dong L."/>
            <person name="Huang Y."/>
            <person name="Li L."/>
            <person name="Xi Y."/>
            <person name="Qi Q."/>
            <person name="Li W."/>
            <person name="Zhang B."/>
            <person name="Hu W."/>
            <person name="Zhang Y."/>
            <person name="Tian X."/>
            <person name="Jiao Y."/>
            <person name="Liang X."/>
            <person name="Jin J."/>
            <person name="Gao L."/>
            <person name="Zheng W."/>
            <person name="Hao B."/>
            <person name="Liu S.-M."/>
            <person name="Wang W."/>
            <person name="Yuan L."/>
            <person name="Cao M."/>
            <person name="McDermott J."/>
            <person name="Samudrala R."/>
            <person name="Wang J."/>
            <person name="Wong G.K.-S."/>
            <person name="Yang H."/>
        </authorList>
    </citation>
    <scope>NUCLEOTIDE SEQUENCE [LARGE SCALE GENOMIC DNA]</scope>
    <source>
        <strain>cv. Nipponbare</strain>
    </source>
</reference>
<reference key="6">
    <citation type="journal article" date="2003" name="Science">
        <title>Collection, mapping, and annotation of over 28,000 cDNA clones from japonica rice.</title>
        <authorList>
            <consortium name="The rice full-length cDNA consortium"/>
        </authorList>
    </citation>
    <scope>NUCLEOTIDE SEQUENCE [LARGE SCALE MRNA]</scope>
    <source>
        <strain>cv. Nipponbare</strain>
    </source>
</reference>
<reference key="7">
    <citation type="journal article" date="2019" name="Plant J.">
        <title>OsSHOC1 and OsPTD1 are essential for crossover formation during rice meiosis.</title>
        <authorList>
            <person name="Ren Y."/>
            <person name="Chen D."/>
            <person name="Li W."/>
            <person name="Zhou D."/>
            <person name="Luo T."/>
            <person name="Yuan G."/>
            <person name="Zeng J."/>
            <person name="Cao Y."/>
            <person name="He Z."/>
            <person name="Zou T."/>
            <person name="Deng Q."/>
            <person name="Wang S."/>
            <person name="Zheng A."/>
            <person name="Zhu J."/>
            <person name="Liang Y."/>
            <person name="Liu H."/>
            <person name="Wang L."/>
            <person name="Li P."/>
            <person name="Li S."/>
        </authorList>
    </citation>
    <scope>FUNCTION</scope>
    <scope>INTERACTION WITH SHOC1 AND HEI10</scope>
    <scope>SUBCELLULAR LOCATION</scope>
    <scope>TISSUE SPECIFICITY</scope>
    <scope>DISRUPTION PHENOTYPE</scope>
</reference>
<reference key="8">
    <citation type="journal article" date="2019" name="Plant Physiol.">
        <title>A multiprotein complex regulates interference-sensitive crossover formation in rice.</title>
        <authorList>
            <person name="Zhang J."/>
            <person name="Wang C."/>
            <person name="Higgins J.D."/>
            <person name="Kim Y.J."/>
            <person name="Moon S."/>
            <person name="Jung K.H."/>
            <person name="Qu S."/>
            <person name="Liang W."/>
        </authorList>
    </citation>
    <scope>FUNCTION</scope>
    <scope>INTERACTION WITH SHOC1 AND HEI10</scope>
    <scope>SUBCELLULAR LOCATION</scope>
    <scope>DISRUPTION PHENOTYPE</scope>
</reference>
<organism>
    <name type="scientific">Oryza sativa subsp. japonica</name>
    <name type="common">Rice</name>
    <dbReference type="NCBI Taxonomy" id="39947"/>
    <lineage>
        <taxon>Eukaryota</taxon>
        <taxon>Viridiplantae</taxon>
        <taxon>Streptophyta</taxon>
        <taxon>Embryophyta</taxon>
        <taxon>Tracheophyta</taxon>
        <taxon>Spermatophyta</taxon>
        <taxon>Magnoliopsida</taxon>
        <taxon>Liliopsida</taxon>
        <taxon>Poales</taxon>
        <taxon>Poaceae</taxon>
        <taxon>BOP clade</taxon>
        <taxon>Oryzoideae</taxon>
        <taxon>Oryzeae</taxon>
        <taxon>Oryzinae</taxon>
        <taxon>Oryza</taxon>
        <taxon>Oryza sativa</taxon>
    </lineage>
</organism>
<feature type="chain" id="PRO_0000448443" description="Protein PARTING DANCERS homolog">
    <location>
        <begin position="1"/>
        <end position="248"/>
    </location>
</feature>
<feature type="region of interest" description="Disordered" evidence="1">
    <location>
        <begin position="1"/>
        <end position="25"/>
    </location>
</feature>
<feature type="compositionally biased region" description="Polar residues" evidence="1">
    <location>
        <begin position="1"/>
        <end position="10"/>
    </location>
</feature>
<dbReference type="EC" id="3.1.-.-" evidence="6"/>
<dbReference type="EMBL" id="AC098598">
    <property type="protein sequence ID" value="AAT44166.1"/>
    <property type="molecule type" value="Genomic_DNA"/>
</dbReference>
<dbReference type="EMBL" id="AC105260">
    <property type="protein sequence ID" value="AAT37994.1"/>
    <property type="status" value="ALT_SEQ"/>
    <property type="molecule type" value="Genomic_DNA"/>
</dbReference>
<dbReference type="EMBL" id="AP008211">
    <property type="protein sequence ID" value="BAF18387.1"/>
    <property type="molecule type" value="Genomic_DNA"/>
</dbReference>
<dbReference type="EMBL" id="AP014961">
    <property type="protein sequence ID" value="BAS95595.1"/>
    <property type="molecule type" value="Genomic_DNA"/>
</dbReference>
<dbReference type="EMBL" id="CM000142">
    <property type="protein sequence ID" value="EEE64870.1"/>
    <property type="molecule type" value="Genomic_DNA"/>
</dbReference>
<dbReference type="EMBL" id="AK109323">
    <property type="protein sequence ID" value="BAG98668.1"/>
    <property type="molecule type" value="mRNA"/>
</dbReference>
<dbReference type="FunCoup" id="Q6L5B5">
    <property type="interactions" value="1456"/>
</dbReference>
<dbReference type="STRING" id="39947.Q6L5B5"/>
<dbReference type="PaxDb" id="39947-Q6L5B5"/>
<dbReference type="EnsemblPlants" id="Os05t0588200-01">
    <property type="protein sequence ID" value="Os05t0588200-01"/>
    <property type="gene ID" value="Os05g0588200"/>
</dbReference>
<dbReference type="Gramene" id="Os05t0588200-01">
    <property type="protein sequence ID" value="Os05t0588200-01"/>
    <property type="gene ID" value="Os05g0588200"/>
</dbReference>
<dbReference type="KEGG" id="dosa:Os05g0588200"/>
<dbReference type="KEGG" id="osa:4339770"/>
<dbReference type="eggNOG" id="ENOG502QRWT">
    <property type="taxonomic scope" value="Eukaryota"/>
</dbReference>
<dbReference type="HOGENOM" id="CLU_080281_0_0_1"/>
<dbReference type="InParanoid" id="Q6L5B5"/>
<dbReference type="OMA" id="SYFQYEM"/>
<dbReference type="OrthoDB" id="1857825at2759"/>
<dbReference type="Proteomes" id="UP000000763">
    <property type="component" value="Chromosome 5"/>
</dbReference>
<dbReference type="Proteomes" id="UP000007752">
    <property type="component" value="Chromosome 5"/>
</dbReference>
<dbReference type="Proteomes" id="UP000059680">
    <property type="component" value="Chromosome 5"/>
</dbReference>
<dbReference type="GO" id="GO:0005694">
    <property type="term" value="C:chromosome"/>
    <property type="evidence" value="ECO:0000314"/>
    <property type="project" value="UniProtKB"/>
</dbReference>
<dbReference type="GO" id="GO:0005737">
    <property type="term" value="C:cytoplasm"/>
    <property type="evidence" value="ECO:0007669"/>
    <property type="project" value="UniProtKB-SubCell"/>
</dbReference>
<dbReference type="GO" id="GO:0005634">
    <property type="term" value="C:nucleus"/>
    <property type="evidence" value="ECO:0000314"/>
    <property type="project" value="UniProtKB"/>
</dbReference>
<dbReference type="GO" id="GO:0005886">
    <property type="term" value="C:plasma membrane"/>
    <property type="evidence" value="ECO:0007669"/>
    <property type="project" value="UniProtKB-SubCell"/>
</dbReference>
<dbReference type="GO" id="GO:0004519">
    <property type="term" value="F:endonuclease activity"/>
    <property type="evidence" value="ECO:0007669"/>
    <property type="project" value="UniProtKB-KW"/>
</dbReference>
<dbReference type="GO" id="GO:0007059">
    <property type="term" value="P:chromosome segregation"/>
    <property type="evidence" value="ECO:0007669"/>
    <property type="project" value="EnsemblPlants"/>
</dbReference>
<dbReference type="GO" id="GO:0007140">
    <property type="term" value="P:male meiotic nuclear division"/>
    <property type="evidence" value="ECO:0007669"/>
    <property type="project" value="EnsemblPlants"/>
</dbReference>
<dbReference type="GO" id="GO:0048236">
    <property type="term" value="P:plant-type sporogenesis"/>
    <property type="evidence" value="ECO:0007669"/>
    <property type="project" value="EnsemblPlants"/>
</dbReference>
<dbReference type="GO" id="GO:0009555">
    <property type="term" value="P:pollen development"/>
    <property type="evidence" value="ECO:0007669"/>
    <property type="project" value="EnsemblPlants"/>
</dbReference>
<dbReference type="GO" id="GO:0010845">
    <property type="term" value="P:positive regulation of reciprocal meiotic recombination"/>
    <property type="evidence" value="ECO:0007669"/>
    <property type="project" value="EnsemblPlants"/>
</dbReference>
<dbReference type="GO" id="GO:0007131">
    <property type="term" value="P:reciprocal meiotic recombination"/>
    <property type="evidence" value="ECO:0000315"/>
    <property type="project" value="UniProtKB"/>
</dbReference>
<dbReference type="GO" id="GO:0000712">
    <property type="term" value="P:resolution of meiotic recombination intermediates"/>
    <property type="evidence" value="ECO:0007669"/>
    <property type="project" value="EnsemblPlants"/>
</dbReference>
<dbReference type="Gene3D" id="1.10.150.20">
    <property type="entry name" value="5' to 3' exonuclease, C-terminal subdomain"/>
    <property type="match status" value="1"/>
</dbReference>
<dbReference type="InterPro" id="IPR039172">
    <property type="entry name" value="PTD"/>
</dbReference>
<dbReference type="InterPro" id="IPR010994">
    <property type="entry name" value="RuvA_2-like"/>
</dbReference>
<dbReference type="PANTHER" id="PTHR37394">
    <property type="entry name" value="PROTEIN PARTING DANCERS"/>
    <property type="match status" value="1"/>
</dbReference>
<dbReference type="PANTHER" id="PTHR37394:SF1">
    <property type="entry name" value="PROTEIN PARTING DANCERS"/>
    <property type="match status" value="1"/>
</dbReference>
<dbReference type="Pfam" id="PF14520">
    <property type="entry name" value="HHH_5"/>
    <property type="match status" value="1"/>
</dbReference>
<dbReference type="SUPFAM" id="SSF47781">
    <property type="entry name" value="RuvA domain 2-like"/>
    <property type="match status" value="1"/>
</dbReference>
<protein>
    <recommendedName>
        <fullName evidence="6">Protein PARTING DANCERS homolog</fullName>
        <shortName evidence="5">OsPTD</shortName>
        <ecNumber evidence="6">3.1.-.-</ecNumber>
    </recommendedName>
    <alternativeName>
        <fullName evidence="6">Protein PARTING DANCERS homolog 1</fullName>
        <shortName evidence="4">OsPTD1</shortName>
    </alternativeName>
</protein>
<name>PTD_ORYSJ</name>